<accession>Q8XU28</accession>
<name>MINE_RALN1</name>
<proteinExistence type="inferred from homology"/>
<protein>
    <recommendedName>
        <fullName evidence="1">Cell division topological specificity factor</fullName>
    </recommendedName>
</protein>
<feature type="chain" id="PRO_0000298172" description="Cell division topological specificity factor">
    <location>
        <begin position="1"/>
        <end position="84"/>
    </location>
</feature>
<organism>
    <name type="scientific">Ralstonia nicotianae (strain ATCC BAA-1114 / GMI1000)</name>
    <name type="common">Ralstonia solanacearum</name>
    <dbReference type="NCBI Taxonomy" id="267608"/>
    <lineage>
        <taxon>Bacteria</taxon>
        <taxon>Pseudomonadati</taxon>
        <taxon>Pseudomonadota</taxon>
        <taxon>Betaproteobacteria</taxon>
        <taxon>Burkholderiales</taxon>
        <taxon>Burkholderiaceae</taxon>
        <taxon>Ralstonia</taxon>
        <taxon>Ralstonia solanacearum species complex</taxon>
    </lineage>
</organism>
<gene>
    <name evidence="1" type="primary">minE</name>
    <name type="ordered locus">RSc3366</name>
</gene>
<dbReference type="EMBL" id="AL646052">
    <property type="protein sequence ID" value="CAD16863.1"/>
    <property type="molecule type" value="Genomic_DNA"/>
</dbReference>
<dbReference type="RefSeq" id="WP_003265669.1">
    <property type="nucleotide sequence ID" value="NC_003295.1"/>
</dbReference>
<dbReference type="SMR" id="Q8XU28"/>
<dbReference type="STRING" id="267608.RSc3366"/>
<dbReference type="EnsemblBacteria" id="CAD16863">
    <property type="protein sequence ID" value="CAD16863"/>
    <property type="gene ID" value="RSc3366"/>
</dbReference>
<dbReference type="GeneID" id="93850797"/>
<dbReference type="KEGG" id="rso:RSc3366"/>
<dbReference type="eggNOG" id="COG0851">
    <property type="taxonomic scope" value="Bacteria"/>
</dbReference>
<dbReference type="HOGENOM" id="CLU_137929_2_1_4"/>
<dbReference type="Proteomes" id="UP000001436">
    <property type="component" value="Chromosome"/>
</dbReference>
<dbReference type="GO" id="GO:0051301">
    <property type="term" value="P:cell division"/>
    <property type="evidence" value="ECO:0007669"/>
    <property type="project" value="UniProtKB-KW"/>
</dbReference>
<dbReference type="GO" id="GO:0032955">
    <property type="term" value="P:regulation of division septum assembly"/>
    <property type="evidence" value="ECO:0007669"/>
    <property type="project" value="InterPro"/>
</dbReference>
<dbReference type="FunFam" id="3.30.1070.10:FF:000001">
    <property type="entry name" value="Cell division topological specificity factor"/>
    <property type="match status" value="1"/>
</dbReference>
<dbReference type="Gene3D" id="3.30.1070.10">
    <property type="entry name" value="Cell division topological specificity factor MinE"/>
    <property type="match status" value="1"/>
</dbReference>
<dbReference type="HAMAP" id="MF_00262">
    <property type="entry name" value="MinE"/>
    <property type="match status" value="1"/>
</dbReference>
<dbReference type="InterPro" id="IPR005527">
    <property type="entry name" value="MinE"/>
</dbReference>
<dbReference type="InterPro" id="IPR036707">
    <property type="entry name" value="MinE_sf"/>
</dbReference>
<dbReference type="NCBIfam" id="TIGR01215">
    <property type="entry name" value="minE"/>
    <property type="match status" value="1"/>
</dbReference>
<dbReference type="NCBIfam" id="NF001422">
    <property type="entry name" value="PRK00296.1"/>
    <property type="match status" value="1"/>
</dbReference>
<dbReference type="NCBIfam" id="NF010595">
    <property type="entry name" value="PRK13989.1"/>
    <property type="match status" value="1"/>
</dbReference>
<dbReference type="Pfam" id="PF03776">
    <property type="entry name" value="MinE"/>
    <property type="match status" value="1"/>
</dbReference>
<dbReference type="SUPFAM" id="SSF55229">
    <property type="entry name" value="Cell division protein MinE topological specificity domain"/>
    <property type="match status" value="1"/>
</dbReference>
<evidence type="ECO:0000255" key="1">
    <source>
        <dbReference type="HAMAP-Rule" id="MF_00262"/>
    </source>
</evidence>
<reference key="1">
    <citation type="journal article" date="2002" name="Nature">
        <title>Genome sequence of the plant pathogen Ralstonia solanacearum.</title>
        <authorList>
            <person name="Salanoubat M."/>
            <person name="Genin S."/>
            <person name="Artiguenave F."/>
            <person name="Gouzy J."/>
            <person name="Mangenot S."/>
            <person name="Arlat M."/>
            <person name="Billault A."/>
            <person name="Brottier P."/>
            <person name="Camus J.-C."/>
            <person name="Cattolico L."/>
            <person name="Chandler M."/>
            <person name="Choisne N."/>
            <person name="Claudel-Renard C."/>
            <person name="Cunnac S."/>
            <person name="Demange N."/>
            <person name="Gaspin C."/>
            <person name="Lavie M."/>
            <person name="Moisan A."/>
            <person name="Robert C."/>
            <person name="Saurin W."/>
            <person name="Schiex T."/>
            <person name="Siguier P."/>
            <person name="Thebault P."/>
            <person name="Whalen M."/>
            <person name="Wincker P."/>
            <person name="Levy M."/>
            <person name="Weissenbach J."/>
            <person name="Boucher C.A."/>
        </authorList>
    </citation>
    <scope>NUCLEOTIDE SEQUENCE [LARGE SCALE GENOMIC DNA]</scope>
    <source>
        <strain>ATCC BAA-1114 / GMI1000</strain>
    </source>
</reference>
<sequence length="84" mass="9424">MSILSFLLGEKKKTASVAKERLQIILAHERSSHSAPADYLPALQRELVAVISKYVKIGNDDIKVNLERQDNLEVLEVKIEIPQA</sequence>
<keyword id="KW-0131">Cell cycle</keyword>
<keyword id="KW-0132">Cell division</keyword>
<keyword id="KW-1185">Reference proteome</keyword>
<comment type="function">
    <text evidence="1">Prevents the cell division inhibition by proteins MinC and MinD at internal division sites while permitting inhibition at polar sites. This ensures cell division at the proper site by restricting the formation of a division septum at the midpoint of the long axis of the cell.</text>
</comment>
<comment type="similarity">
    <text evidence="1">Belongs to the MinE family.</text>
</comment>